<protein>
    <recommendedName>
        <fullName evidence="1">Ribosomal RNA small subunit methyltransferase G</fullName>
        <ecNumber evidence="1">2.1.1.-</ecNumber>
    </recommendedName>
    <alternativeName>
        <fullName evidence="1">16S rRNA 7-methylguanosine methyltransferase</fullName>
        <shortName evidence="1">16S rRNA m7G methyltransferase</shortName>
    </alternativeName>
</protein>
<accession>A0RLR0</accession>
<organism>
    <name type="scientific">Bacillus thuringiensis (strain Al Hakam)</name>
    <dbReference type="NCBI Taxonomy" id="412694"/>
    <lineage>
        <taxon>Bacteria</taxon>
        <taxon>Bacillati</taxon>
        <taxon>Bacillota</taxon>
        <taxon>Bacilli</taxon>
        <taxon>Bacillales</taxon>
        <taxon>Bacillaceae</taxon>
        <taxon>Bacillus</taxon>
        <taxon>Bacillus cereus group</taxon>
    </lineage>
</organism>
<dbReference type="EC" id="2.1.1.-" evidence="1"/>
<dbReference type="EMBL" id="CP000485">
    <property type="protein sequence ID" value="ABK88153.1"/>
    <property type="molecule type" value="Genomic_DNA"/>
</dbReference>
<dbReference type="RefSeq" id="WP_001019621.1">
    <property type="nucleotide sequence ID" value="NC_008600.1"/>
</dbReference>
<dbReference type="SMR" id="A0RLR0"/>
<dbReference type="GeneID" id="93005640"/>
<dbReference type="KEGG" id="btl:BALH_4989"/>
<dbReference type="HOGENOM" id="CLU_065341_0_2_9"/>
<dbReference type="GO" id="GO:0005829">
    <property type="term" value="C:cytosol"/>
    <property type="evidence" value="ECO:0007669"/>
    <property type="project" value="TreeGrafter"/>
</dbReference>
<dbReference type="GO" id="GO:0070043">
    <property type="term" value="F:rRNA (guanine-N7-)-methyltransferase activity"/>
    <property type="evidence" value="ECO:0007669"/>
    <property type="project" value="UniProtKB-UniRule"/>
</dbReference>
<dbReference type="CDD" id="cd02440">
    <property type="entry name" value="AdoMet_MTases"/>
    <property type="match status" value="1"/>
</dbReference>
<dbReference type="FunFam" id="3.40.50.150:FF:000041">
    <property type="entry name" value="Ribosomal RNA small subunit methyltransferase G"/>
    <property type="match status" value="1"/>
</dbReference>
<dbReference type="Gene3D" id="3.40.50.150">
    <property type="entry name" value="Vaccinia Virus protein VP39"/>
    <property type="match status" value="1"/>
</dbReference>
<dbReference type="HAMAP" id="MF_00074">
    <property type="entry name" value="16SrRNA_methyltr_G"/>
    <property type="match status" value="1"/>
</dbReference>
<dbReference type="InterPro" id="IPR003682">
    <property type="entry name" value="rRNA_ssu_MeTfrase_G"/>
</dbReference>
<dbReference type="InterPro" id="IPR029063">
    <property type="entry name" value="SAM-dependent_MTases_sf"/>
</dbReference>
<dbReference type="NCBIfam" id="TIGR00138">
    <property type="entry name" value="rsmG_gidB"/>
    <property type="match status" value="1"/>
</dbReference>
<dbReference type="PANTHER" id="PTHR31760">
    <property type="entry name" value="S-ADENOSYL-L-METHIONINE-DEPENDENT METHYLTRANSFERASES SUPERFAMILY PROTEIN"/>
    <property type="match status" value="1"/>
</dbReference>
<dbReference type="PANTHER" id="PTHR31760:SF0">
    <property type="entry name" value="S-ADENOSYL-L-METHIONINE-DEPENDENT METHYLTRANSFERASES SUPERFAMILY PROTEIN"/>
    <property type="match status" value="1"/>
</dbReference>
<dbReference type="Pfam" id="PF02527">
    <property type="entry name" value="GidB"/>
    <property type="match status" value="1"/>
</dbReference>
<dbReference type="PIRSF" id="PIRSF003078">
    <property type="entry name" value="GidB"/>
    <property type="match status" value="1"/>
</dbReference>
<dbReference type="SUPFAM" id="SSF53335">
    <property type="entry name" value="S-adenosyl-L-methionine-dependent methyltransferases"/>
    <property type="match status" value="1"/>
</dbReference>
<keyword id="KW-0963">Cytoplasm</keyword>
<keyword id="KW-0489">Methyltransferase</keyword>
<keyword id="KW-0698">rRNA processing</keyword>
<keyword id="KW-0949">S-adenosyl-L-methionine</keyword>
<keyword id="KW-0808">Transferase</keyword>
<reference key="1">
    <citation type="journal article" date="2007" name="J. Bacteriol.">
        <title>The complete genome sequence of Bacillus thuringiensis Al Hakam.</title>
        <authorList>
            <person name="Challacombe J.F."/>
            <person name="Altherr M.R."/>
            <person name="Xie G."/>
            <person name="Bhotika S.S."/>
            <person name="Brown N."/>
            <person name="Bruce D."/>
            <person name="Campbell C.S."/>
            <person name="Campbell M.L."/>
            <person name="Chen J."/>
            <person name="Chertkov O."/>
            <person name="Cleland C."/>
            <person name="Dimitrijevic M."/>
            <person name="Doggett N.A."/>
            <person name="Fawcett J.J."/>
            <person name="Glavina T."/>
            <person name="Goodwin L.A."/>
            <person name="Green L.D."/>
            <person name="Han C.S."/>
            <person name="Hill K.K."/>
            <person name="Hitchcock P."/>
            <person name="Jackson P.J."/>
            <person name="Keim P."/>
            <person name="Kewalramani A.R."/>
            <person name="Longmire J."/>
            <person name="Lucas S."/>
            <person name="Malfatti S."/>
            <person name="Martinez D."/>
            <person name="McMurry K."/>
            <person name="Meincke L.J."/>
            <person name="Misra M."/>
            <person name="Moseman B.L."/>
            <person name="Mundt M."/>
            <person name="Munk A.C."/>
            <person name="Okinaka R.T."/>
            <person name="Parson-Quintana B."/>
            <person name="Reilly L.P."/>
            <person name="Richardson P."/>
            <person name="Robinson D.L."/>
            <person name="Saunders E."/>
            <person name="Tapia R."/>
            <person name="Tesmer J.G."/>
            <person name="Thayer N."/>
            <person name="Thompson L.S."/>
            <person name="Tice H."/>
            <person name="Ticknor L.O."/>
            <person name="Wills P.L."/>
            <person name="Gilna P."/>
            <person name="Brettin T.S."/>
        </authorList>
    </citation>
    <scope>NUCLEOTIDE SEQUENCE [LARGE SCALE GENOMIC DNA]</scope>
    <source>
        <strain>Al Hakam</strain>
    </source>
</reference>
<name>RSMG_BACAH</name>
<evidence type="ECO:0000255" key="1">
    <source>
        <dbReference type="HAMAP-Rule" id="MF_00074"/>
    </source>
</evidence>
<comment type="function">
    <text evidence="1">Specifically methylates the N7 position of guanine in position 535 of 16S rRNA.</text>
</comment>
<comment type="subcellular location">
    <subcellularLocation>
        <location evidence="1">Cytoplasm</location>
    </subcellularLocation>
</comment>
<comment type="similarity">
    <text evidence="1">Belongs to the methyltransferase superfamily. RNA methyltransferase RsmG family.</text>
</comment>
<proteinExistence type="inferred from homology"/>
<feature type="chain" id="PRO_1000010120" description="Ribosomal RNA small subunit methyltransferase G">
    <location>
        <begin position="1"/>
        <end position="239"/>
    </location>
</feature>
<feature type="binding site" evidence="1">
    <location>
        <position position="77"/>
    </location>
    <ligand>
        <name>S-adenosyl-L-methionine</name>
        <dbReference type="ChEBI" id="CHEBI:59789"/>
    </ligand>
</feature>
<feature type="binding site" evidence="1">
    <location>
        <position position="82"/>
    </location>
    <ligand>
        <name>S-adenosyl-L-methionine</name>
        <dbReference type="ChEBI" id="CHEBI:59789"/>
    </ligand>
</feature>
<feature type="binding site" evidence="1">
    <location>
        <begin position="128"/>
        <end position="129"/>
    </location>
    <ligand>
        <name>S-adenosyl-L-methionine</name>
        <dbReference type="ChEBI" id="CHEBI:59789"/>
    </ligand>
</feature>
<feature type="binding site" evidence="1">
    <location>
        <position position="147"/>
    </location>
    <ligand>
        <name>S-adenosyl-L-methionine</name>
        <dbReference type="ChEBI" id="CHEBI:59789"/>
    </ligand>
</feature>
<gene>
    <name evidence="1" type="primary">rsmG</name>
    <name type="ordered locus">BALH_4989</name>
</gene>
<sequence>MNIEQFQSMLEEKGITLSSRQLEQFEIYFETLVEWNEKMNLTAITEKEEVYLKHFFDSITAAFYYDFSKPFSICDVGAGAGFPSIPLKICFPHLKVTIVDSLQKRINFLNHLAQKLELSDVAFCHDRAETFGKKEGVREAYDIVMARAVARLSVLSELCLPLVKVGGTFIAMKGAAANEEIENGKYALEVLGGDLKEMSTFQLPFEESERNILLIEKKRKTPKKYPRKPGTPNKLPIEK</sequence>